<dbReference type="SMR" id="P84618"/>
<dbReference type="iPTMnet" id="P84618"/>
<dbReference type="GO" id="GO:0005576">
    <property type="term" value="C:extracellular region"/>
    <property type="evidence" value="ECO:0007669"/>
    <property type="project" value="UniProtKB-KW"/>
</dbReference>
<dbReference type="GO" id="GO:0030246">
    <property type="term" value="F:carbohydrate binding"/>
    <property type="evidence" value="ECO:0007669"/>
    <property type="project" value="UniProtKB-KW"/>
</dbReference>
<dbReference type="CDD" id="cd03594">
    <property type="entry name" value="CLECT_REG-1_like"/>
    <property type="match status" value="1"/>
</dbReference>
<dbReference type="FunFam" id="3.10.100.10:FF:000087">
    <property type="entry name" value="Snaclec rhodocetin subunit delta"/>
    <property type="match status" value="1"/>
</dbReference>
<dbReference type="Gene3D" id="3.10.100.10">
    <property type="entry name" value="Mannose-Binding Protein A, subunit A"/>
    <property type="match status" value="1"/>
</dbReference>
<dbReference type="InterPro" id="IPR001304">
    <property type="entry name" value="C-type_lectin-like"/>
</dbReference>
<dbReference type="InterPro" id="IPR016186">
    <property type="entry name" value="C-type_lectin-like/link_sf"/>
</dbReference>
<dbReference type="InterPro" id="IPR050111">
    <property type="entry name" value="C-type_lectin/snaclec_domain"/>
</dbReference>
<dbReference type="InterPro" id="IPR016187">
    <property type="entry name" value="CTDL_fold"/>
</dbReference>
<dbReference type="PANTHER" id="PTHR22803">
    <property type="entry name" value="MANNOSE, PHOSPHOLIPASE, LECTIN RECEPTOR RELATED"/>
    <property type="match status" value="1"/>
</dbReference>
<dbReference type="Pfam" id="PF00059">
    <property type="entry name" value="Lectin_C"/>
    <property type="match status" value="1"/>
</dbReference>
<dbReference type="SMART" id="SM00034">
    <property type="entry name" value="CLECT"/>
    <property type="match status" value="1"/>
</dbReference>
<dbReference type="SUPFAM" id="SSF56436">
    <property type="entry name" value="C-type lectin-like"/>
    <property type="match status" value="1"/>
</dbReference>
<dbReference type="PROSITE" id="PS50041">
    <property type="entry name" value="C_TYPE_LECTIN_2"/>
    <property type="match status" value="1"/>
</dbReference>
<accession>P84618</accession>
<organism>
    <name type="scientific">Rhea americana</name>
    <name type="common">Greater rhea</name>
    <name type="synonym">Common rhea</name>
    <dbReference type="NCBI Taxonomy" id="8797"/>
    <lineage>
        <taxon>Eukaryota</taxon>
        <taxon>Metazoa</taxon>
        <taxon>Chordata</taxon>
        <taxon>Craniata</taxon>
        <taxon>Vertebrata</taxon>
        <taxon>Euteleostomi</taxon>
        <taxon>Archelosauria</taxon>
        <taxon>Archosauria</taxon>
        <taxon>Dinosauria</taxon>
        <taxon>Saurischia</taxon>
        <taxon>Theropoda</taxon>
        <taxon>Coelurosauria</taxon>
        <taxon>Aves</taxon>
        <taxon>Palaeognathae</taxon>
        <taxon>Rheiformes</taxon>
        <taxon>Rheidae</taxon>
        <taxon>Rhea</taxon>
    </lineage>
</organism>
<protein>
    <recommendedName>
        <fullName>Rheacalcin-2</fullName>
        <shortName>RCA-2</shortName>
    </recommendedName>
</protein>
<comment type="subcellular location">
    <subcellularLocation>
        <location>Secreted</location>
        <location>Extracellular space</location>
        <location>Extracellular matrix</location>
    </subcellularLocation>
    <text>Eggshell matrix.</text>
</comment>
<comment type="mass spectrometry" mass="16847.2" method="Electrospray" evidence="4"/>
<proteinExistence type="evidence at protein level"/>
<reference key="1">
    <citation type="journal article" date="2006" name="Comp. Biochem. Physiol.">
        <title>Amino acid sequences and phosphorylation sites of emu and rhea eggshell C-type lectin-like proteins.</title>
        <authorList>
            <person name="Mann K."/>
            <person name="Siedler F."/>
        </authorList>
    </citation>
    <scope>PROTEIN SEQUENCE</scope>
    <scope>MASS SPECTROMETRY</scope>
    <scope>PHOSPHORYLATION AT SER-66 AND SER-68</scope>
    <source>
        <tissue>Eggshell matrix</tissue>
    </source>
</reference>
<reference evidence="5" key="2">
    <citation type="journal article" date="2004" name="Br. Poult. Sci.">
        <title>Identification of the major proteins of the organic matrix of emu (Dromaius novaehollandiae) and rhea (Rhea americana) eggshell calcified layer.</title>
        <authorList>
            <person name="Mann K."/>
        </authorList>
    </citation>
    <scope>PROTEIN SEQUENCE OF 1-30</scope>
    <source>
        <tissue evidence="3">Eggshell matrix</tissue>
    </source>
</reference>
<sequence length="143" mass="16692">DEQEGCASGWVPFDGRCFGFFPQELSWRRAEGFCQRLGARTHLASIHSEEEHQAIMSMLASSQPYSESEEEVADEEVWIGLHRPMGRRHWEWSDGTKMDYSSWYREGFPRRRACAALEDSTDFASWDTELCSDRKPFICEYHV</sequence>
<keyword id="KW-0903">Direct protein sequencing</keyword>
<keyword id="KW-1015">Disulfide bond</keyword>
<keyword id="KW-0272">Extracellular matrix</keyword>
<keyword id="KW-0430">Lectin</keyword>
<keyword id="KW-0597">Phosphoprotein</keyword>
<keyword id="KW-0964">Secreted</keyword>
<feature type="chain" id="PRO_0000046719" description="Rheacalcin-2">
    <location>
        <begin position="1"/>
        <end position="143"/>
    </location>
</feature>
<feature type="domain" description="C-type lectin" evidence="2">
    <location>
        <begin position="13"/>
        <end position="140"/>
    </location>
</feature>
<feature type="modified residue" description="Phosphoserine" evidence="4">
    <location>
        <position position="66"/>
    </location>
</feature>
<feature type="modified residue" description="Phosphoserine" evidence="4">
    <location>
        <position position="68"/>
    </location>
</feature>
<feature type="disulfide bond" evidence="1 2">
    <location>
        <begin position="6"/>
        <end position="17"/>
    </location>
</feature>
<feature type="disulfide bond" evidence="1 2">
    <location>
        <begin position="34"/>
        <end position="139"/>
    </location>
</feature>
<feature type="disulfide bond" evidence="1 2">
    <location>
        <begin position="114"/>
        <end position="131"/>
    </location>
</feature>
<evidence type="ECO:0000250" key="1">
    <source>
        <dbReference type="UniProtKB" id="Q9PRS8"/>
    </source>
</evidence>
<evidence type="ECO:0000255" key="2">
    <source>
        <dbReference type="PROSITE-ProRule" id="PRU00040"/>
    </source>
</evidence>
<evidence type="ECO:0000269" key="3">
    <source>
    </source>
</evidence>
<evidence type="ECO:0000269" key="4">
    <source>
    </source>
</evidence>
<evidence type="ECO:0000305" key="5"/>
<name>RCAL2_RHEAM</name>